<comment type="function">
    <text evidence="1">Involved in regulation of DNA replication.</text>
</comment>
<comment type="similarity">
    <text evidence="1">Belongs to the CDC6/cdc18 family.</text>
</comment>
<reference key="1">
    <citation type="journal article" date="2006" name="J. Bacteriol.">
        <title>The genome sequence of Methanosphaera stadtmanae reveals why this human intestinal archaeon is restricted to methanol and H2 for methane formation and ATP synthesis.</title>
        <authorList>
            <person name="Fricke W.F."/>
            <person name="Seedorf H."/>
            <person name="Henne A."/>
            <person name="Kruer M."/>
            <person name="Liesegang H."/>
            <person name="Hedderich R."/>
            <person name="Gottschalk G."/>
            <person name="Thauer R.K."/>
        </authorList>
    </citation>
    <scope>NUCLEOTIDE SEQUENCE [LARGE SCALE GENOMIC DNA]</scope>
    <source>
        <strain>ATCC 43021 / DSM 3091 / JCM 11832 / MCB-3</strain>
    </source>
</reference>
<name>CDC6_METST</name>
<feature type="chain" id="PRO_1000145507" description="ORC1-type DNA replication protein">
    <location>
        <begin position="1"/>
        <end position="384"/>
    </location>
</feature>
<feature type="binding site" evidence="1">
    <location>
        <begin position="64"/>
        <end position="68"/>
    </location>
    <ligand>
        <name>ATP</name>
        <dbReference type="ChEBI" id="CHEBI:30616"/>
    </ligand>
</feature>
<feature type="binding site" evidence="1">
    <location>
        <position position="206"/>
    </location>
    <ligand>
        <name>ATP</name>
        <dbReference type="ChEBI" id="CHEBI:30616"/>
    </ligand>
</feature>
<feature type="binding site" evidence="1">
    <location>
        <position position="218"/>
    </location>
    <ligand>
        <name>ATP</name>
        <dbReference type="ChEBI" id="CHEBI:30616"/>
    </ligand>
</feature>
<organism>
    <name type="scientific">Methanosphaera stadtmanae (strain ATCC 43021 / DSM 3091 / JCM 11832 / MCB-3)</name>
    <dbReference type="NCBI Taxonomy" id="339860"/>
    <lineage>
        <taxon>Archaea</taxon>
        <taxon>Methanobacteriati</taxon>
        <taxon>Methanobacteriota</taxon>
        <taxon>Methanomada group</taxon>
        <taxon>Methanobacteria</taxon>
        <taxon>Methanobacteriales</taxon>
        <taxon>Methanobacteriaceae</taxon>
        <taxon>Methanosphaera</taxon>
    </lineage>
</organism>
<accession>Q2NIC5</accession>
<dbReference type="EMBL" id="CP000102">
    <property type="protein sequence ID" value="ABC56421.1"/>
    <property type="molecule type" value="Genomic_DNA"/>
</dbReference>
<dbReference type="RefSeq" id="WP_011405620.1">
    <property type="nucleotide sequence ID" value="NC_007681.1"/>
</dbReference>
<dbReference type="SMR" id="Q2NIC5"/>
<dbReference type="STRING" id="339860.Msp_0001"/>
<dbReference type="KEGG" id="mst:Msp_0001"/>
<dbReference type="eggNOG" id="arCOG00467">
    <property type="taxonomic scope" value="Archaea"/>
</dbReference>
<dbReference type="HOGENOM" id="CLU_025112_3_1_2"/>
<dbReference type="OrthoDB" id="195574at2157"/>
<dbReference type="Proteomes" id="UP000001931">
    <property type="component" value="Chromosome"/>
</dbReference>
<dbReference type="GO" id="GO:0005524">
    <property type="term" value="F:ATP binding"/>
    <property type="evidence" value="ECO:0007669"/>
    <property type="project" value="UniProtKB-UniRule"/>
</dbReference>
<dbReference type="GO" id="GO:0016887">
    <property type="term" value="F:ATP hydrolysis activity"/>
    <property type="evidence" value="ECO:0007669"/>
    <property type="project" value="InterPro"/>
</dbReference>
<dbReference type="GO" id="GO:0006260">
    <property type="term" value="P:DNA replication"/>
    <property type="evidence" value="ECO:0007669"/>
    <property type="project" value="UniProtKB-UniRule"/>
</dbReference>
<dbReference type="CDD" id="cd08768">
    <property type="entry name" value="Cdc6_C"/>
    <property type="match status" value="1"/>
</dbReference>
<dbReference type="FunFam" id="1.10.8.60:FF:000073">
    <property type="entry name" value="ORC1-type DNA replication protein"/>
    <property type="match status" value="1"/>
</dbReference>
<dbReference type="Gene3D" id="1.10.8.60">
    <property type="match status" value="1"/>
</dbReference>
<dbReference type="Gene3D" id="3.40.50.300">
    <property type="entry name" value="P-loop containing nucleotide triphosphate hydrolases"/>
    <property type="match status" value="1"/>
</dbReference>
<dbReference type="Gene3D" id="1.10.10.10">
    <property type="entry name" value="Winged helix-like DNA-binding domain superfamily/Winged helix DNA-binding domain"/>
    <property type="match status" value="1"/>
</dbReference>
<dbReference type="HAMAP" id="MF_01407">
    <property type="entry name" value="ORC1_type_DNA_replic_protein"/>
    <property type="match status" value="1"/>
</dbReference>
<dbReference type="InterPro" id="IPR049945">
    <property type="entry name" value="AAA_22"/>
</dbReference>
<dbReference type="InterPro" id="IPR015163">
    <property type="entry name" value="Cdc6_C"/>
</dbReference>
<dbReference type="InterPro" id="IPR055237">
    <property type="entry name" value="Cdc6_lid"/>
</dbReference>
<dbReference type="InterPro" id="IPR050311">
    <property type="entry name" value="ORC1/CDC6"/>
</dbReference>
<dbReference type="InterPro" id="IPR014277">
    <property type="entry name" value="Orc1/Cdc6_arc"/>
</dbReference>
<dbReference type="InterPro" id="IPR027417">
    <property type="entry name" value="P-loop_NTPase"/>
</dbReference>
<dbReference type="InterPro" id="IPR036388">
    <property type="entry name" value="WH-like_DNA-bd_sf"/>
</dbReference>
<dbReference type="InterPro" id="IPR036390">
    <property type="entry name" value="WH_DNA-bd_sf"/>
</dbReference>
<dbReference type="NCBIfam" id="TIGR02928">
    <property type="entry name" value="orc1/cdc6 family replication initiation protein"/>
    <property type="match status" value="1"/>
</dbReference>
<dbReference type="PANTHER" id="PTHR10763:SF26">
    <property type="entry name" value="CELL DIVISION CONTROL PROTEIN 6 HOMOLOG"/>
    <property type="match status" value="1"/>
</dbReference>
<dbReference type="PANTHER" id="PTHR10763">
    <property type="entry name" value="CELL DIVISION CONTROL PROTEIN 6-RELATED"/>
    <property type="match status" value="1"/>
</dbReference>
<dbReference type="Pfam" id="PF13401">
    <property type="entry name" value="AAA_22"/>
    <property type="match status" value="1"/>
</dbReference>
<dbReference type="Pfam" id="PF09079">
    <property type="entry name" value="Cdc6_C"/>
    <property type="match status" value="1"/>
</dbReference>
<dbReference type="Pfam" id="PF22703">
    <property type="entry name" value="Cdc6_lid"/>
    <property type="match status" value="1"/>
</dbReference>
<dbReference type="SMART" id="SM01074">
    <property type="entry name" value="Cdc6_C"/>
    <property type="match status" value="1"/>
</dbReference>
<dbReference type="SUPFAM" id="SSF52540">
    <property type="entry name" value="P-loop containing nucleoside triphosphate hydrolases"/>
    <property type="match status" value="1"/>
</dbReference>
<dbReference type="SUPFAM" id="SSF46785">
    <property type="entry name" value="Winged helix' DNA-binding domain"/>
    <property type="match status" value="1"/>
</dbReference>
<sequence>MNNIFKTINNKDSIFLTKKYLDHRFIPETLPHRDEKIKSIAQYWVESLDKITPPDITIYGKTGTGKTAVTLYAKKQLEEVAAEQNLNIRVEYIRCTDYNTEYQILARLCQQLGKPVPYRGWTKAEVVNAFRNLFKKNILGEDLILIVILDEVDVILKNDGDNILYTLTRTDNVAITSISNYIDFKQFIKPKVKSSLRDREIVFPPYNAQQLIDILKERSKVSFSEGAISEGVIALCSALAAKEEGDARYALDLLKTSGEIADEKESSVIEESFVKEAKDRIEHSKIIDVVVTLPIQQQKVLESITYLTKKREEITSGRLYEVYQDLAKNDKVSYRRIFDFINELEMLGLISTNTISRGRGKGRTNIITLQCDIELIDKALIYKD</sequence>
<protein>
    <recommendedName>
        <fullName evidence="1">ORC1-type DNA replication protein</fullName>
    </recommendedName>
</protein>
<keyword id="KW-0067">ATP-binding</keyword>
<keyword id="KW-0235">DNA replication</keyword>
<keyword id="KW-0547">Nucleotide-binding</keyword>
<keyword id="KW-1185">Reference proteome</keyword>
<evidence type="ECO:0000255" key="1">
    <source>
        <dbReference type="HAMAP-Rule" id="MF_01407"/>
    </source>
</evidence>
<proteinExistence type="inferred from homology"/>
<gene>
    <name type="primary">cdc6</name>
    <name type="ordered locus">Msp_0001</name>
</gene>